<name>Y3141_YERPN</name>
<comment type="similarity">
    <text evidence="1">Belongs to the UPF0235 family.</text>
</comment>
<sequence>MSAVLSTENGLILKLYIQPKASRDQIVGLHGDELKVAITAPPVDGQANTHLVKFIAKQFRVAKSQVIIEKGELGRHKQIKVINPQQIPPEVTILLE</sequence>
<protein>
    <recommendedName>
        <fullName evidence="1">UPF0235 protein YPN_3141</fullName>
    </recommendedName>
</protein>
<evidence type="ECO:0000255" key="1">
    <source>
        <dbReference type="HAMAP-Rule" id="MF_00634"/>
    </source>
</evidence>
<accession>Q1CEW2</accession>
<accession>C4GXI7</accession>
<organism>
    <name type="scientific">Yersinia pestis bv. Antiqua (strain Nepal516)</name>
    <dbReference type="NCBI Taxonomy" id="377628"/>
    <lineage>
        <taxon>Bacteria</taxon>
        <taxon>Pseudomonadati</taxon>
        <taxon>Pseudomonadota</taxon>
        <taxon>Gammaproteobacteria</taxon>
        <taxon>Enterobacterales</taxon>
        <taxon>Yersiniaceae</taxon>
        <taxon>Yersinia</taxon>
    </lineage>
</organism>
<dbReference type="EMBL" id="CP000305">
    <property type="protein sequence ID" value="ABG19468.1"/>
    <property type="molecule type" value="Genomic_DNA"/>
</dbReference>
<dbReference type="EMBL" id="ACNQ01000017">
    <property type="protein sequence ID" value="EEO75637.1"/>
    <property type="molecule type" value="Genomic_DNA"/>
</dbReference>
<dbReference type="SMR" id="Q1CEW2"/>
<dbReference type="KEGG" id="ypn:YPN_3141"/>
<dbReference type="HOGENOM" id="CLU_130694_6_0_6"/>
<dbReference type="Proteomes" id="UP000008936">
    <property type="component" value="Chromosome"/>
</dbReference>
<dbReference type="GO" id="GO:0005737">
    <property type="term" value="C:cytoplasm"/>
    <property type="evidence" value="ECO:0007669"/>
    <property type="project" value="TreeGrafter"/>
</dbReference>
<dbReference type="Gene3D" id="3.30.1200.10">
    <property type="entry name" value="YggU-like"/>
    <property type="match status" value="1"/>
</dbReference>
<dbReference type="HAMAP" id="MF_00634">
    <property type="entry name" value="UPF0235"/>
    <property type="match status" value="1"/>
</dbReference>
<dbReference type="InterPro" id="IPR003746">
    <property type="entry name" value="DUF167"/>
</dbReference>
<dbReference type="InterPro" id="IPR036591">
    <property type="entry name" value="YggU-like_sf"/>
</dbReference>
<dbReference type="NCBIfam" id="TIGR00251">
    <property type="entry name" value="DUF167 family protein"/>
    <property type="match status" value="1"/>
</dbReference>
<dbReference type="NCBIfam" id="NF003466">
    <property type="entry name" value="PRK05090.1"/>
    <property type="match status" value="1"/>
</dbReference>
<dbReference type="PANTHER" id="PTHR13420">
    <property type="entry name" value="UPF0235 PROTEIN C15ORF40"/>
    <property type="match status" value="1"/>
</dbReference>
<dbReference type="PANTHER" id="PTHR13420:SF7">
    <property type="entry name" value="UPF0235 PROTEIN C15ORF40"/>
    <property type="match status" value="1"/>
</dbReference>
<dbReference type="Pfam" id="PF02594">
    <property type="entry name" value="DUF167"/>
    <property type="match status" value="1"/>
</dbReference>
<dbReference type="SMART" id="SM01152">
    <property type="entry name" value="DUF167"/>
    <property type="match status" value="1"/>
</dbReference>
<dbReference type="SUPFAM" id="SSF69786">
    <property type="entry name" value="YggU-like"/>
    <property type="match status" value="1"/>
</dbReference>
<proteinExistence type="inferred from homology"/>
<reference key="1">
    <citation type="journal article" date="2006" name="J. Bacteriol.">
        <title>Complete genome sequence of Yersinia pestis strains Antiqua and Nepal516: evidence of gene reduction in an emerging pathogen.</title>
        <authorList>
            <person name="Chain P.S.G."/>
            <person name="Hu P."/>
            <person name="Malfatti S.A."/>
            <person name="Radnedge L."/>
            <person name="Larimer F."/>
            <person name="Vergez L.M."/>
            <person name="Worsham P."/>
            <person name="Chu M.C."/>
            <person name="Andersen G.L."/>
        </authorList>
    </citation>
    <scope>NUCLEOTIDE SEQUENCE [LARGE SCALE GENOMIC DNA]</scope>
    <source>
        <strain>Nepal516</strain>
    </source>
</reference>
<reference key="2">
    <citation type="submission" date="2009-04" db="EMBL/GenBank/DDBJ databases">
        <title>Yersinia pestis Nepal516A whole genome shotgun sequencing project.</title>
        <authorList>
            <person name="Plunkett G. III"/>
            <person name="Anderson B.D."/>
            <person name="Baumler D.J."/>
            <person name="Burland V."/>
            <person name="Cabot E.L."/>
            <person name="Glasner J.D."/>
            <person name="Mau B."/>
            <person name="Neeno-Eckwall E."/>
            <person name="Perna N.T."/>
            <person name="Munk A.C."/>
            <person name="Tapia R."/>
            <person name="Green L.D."/>
            <person name="Rogers Y.C."/>
            <person name="Detter J.C."/>
            <person name="Bruce D.C."/>
            <person name="Brettin T.S."/>
        </authorList>
    </citation>
    <scope>NUCLEOTIDE SEQUENCE [LARGE SCALE GENOMIC DNA]</scope>
    <source>
        <strain>Nepal516</strain>
    </source>
</reference>
<feature type="chain" id="PRO_1000056798" description="UPF0235 protein YPN_3141">
    <location>
        <begin position="1"/>
        <end position="96"/>
    </location>
</feature>
<gene>
    <name type="ordered locus">YPN_3141</name>
    <name type="ORF">YP516_3568</name>
</gene>